<dbReference type="EMBL" id="Z46660">
    <property type="protein sequence ID" value="CAA86657.1"/>
    <property type="molecule type" value="Genomic_DNA"/>
</dbReference>
<dbReference type="EMBL" id="Z46373">
    <property type="protein sequence ID" value="CAA86497.1"/>
    <property type="molecule type" value="Genomic_DNA"/>
</dbReference>
<dbReference type="EMBL" id="BK006946">
    <property type="protein sequence ID" value="DAA09816.1"/>
    <property type="molecule type" value="Genomic_DNA"/>
</dbReference>
<dbReference type="PIR" id="S49645">
    <property type="entry name" value="S49645"/>
</dbReference>
<dbReference type="RefSeq" id="NP_013630.1">
    <property type="nucleotide sequence ID" value="NM_001182440.1"/>
</dbReference>
<dbReference type="BioGRID" id="35060">
    <property type="interactions" value="64"/>
</dbReference>
<dbReference type="FunCoup" id="Q04545">
    <property type="interactions" value="463"/>
</dbReference>
<dbReference type="IntAct" id="Q04545">
    <property type="interactions" value="6"/>
</dbReference>
<dbReference type="STRING" id="4932.YML081W"/>
<dbReference type="GlyGen" id="Q04545">
    <property type="glycosylation" value="4 sites, 1 O-linked glycan (2 sites)"/>
</dbReference>
<dbReference type="iPTMnet" id="Q04545"/>
<dbReference type="PaxDb" id="4932-YML081W"/>
<dbReference type="PeptideAtlas" id="Q04545"/>
<dbReference type="EnsemblFungi" id="YML081W_mRNA">
    <property type="protein sequence ID" value="YML081W"/>
    <property type="gene ID" value="YML081W"/>
</dbReference>
<dbReference type="GeneID" id="854894"/>
<dbReference type="KEGG" id="sce:YML081W"/>
<dbReference type="AGR" id="SGD:S000004546"/>
<dbReference type="SGD" id="S000004546">
    <property type="gene designation" value="TDA9"/>
</dbReference>
<dbReference type="VEuPathDB" id="FungiDB:YML081W"/>
<dbReference type="eggNOG" id="KOG1721">
    <property type="taxonomic scope" value="Eukaryota"/>
</dbReference>
<dbReference type="GeneTree" id="ENSGT00940000176773"/>
<dbReference type="HOGENOM" id="CLU_003977_1_0_1"/>
<dbReference type="InParanoid" id="Q04545"/>
<dbReference type="OMA" id="MAHQCLV"/>
<dbReference type="OrthoDB" id="6077919at2759"/>
<dbReference type="BioCyc" id="YEAST:G3O-32672-MONOMER"/>
<dbReference type="BioGRID-ORCS" id="854894">
    <property type="hits" value="4 hits in 13 CRISPR screens"/>
</dbReference>
<dbReference type="PRO" id="PR:Q04545"/>
<dbReference type="Proteomes" id="UP000002311">
    <property type="component" value="Chromosome XIII"/>
</dbReference>
<dbReference type="RNAct" id="Q04545">
    <property type="molecule type" value="protein"/>
</dbReference>
<dbReference type="GO" id="GO:0000785">
    <property type="term" value="C:chromatin"/>
    <property type="evidence" value="ECO:0000318"/>
    <property type="project" value="GO_Central"/>
</dbReference>
<dbReference type="GO" id="GO:0005634">
    <property type="term" value="C:nucleus"/>
    <property type="evidence" value="ECO:0007005"/>
    <property type="project" value="SGD"/>
</dbReference>
<dbReference type="GO" id="GO:0000981">
    <property type="term" value="F:DNA-binding transcription factor activity, RNA polymerase II-specific"/>
    <property type="evidence" value="ECO:0000318"/>
    <property type="project" value="GO_Central"/>
</dbReference>
<dbReference type="GO" id="GO:0000978">
    <property type="term" value="F:RNA polymerase II cis-regulatory region sequence-specific DNA binding"/>
    <property type="evidence" value="ECO:0000318"/>
    <property type="project" value="GO_Central"/>
</dbReference>
<dbReference type="GO" id="GO:0043565">
    <property type="term" value="F:sequence-specific DNA binding"/>
    <property type="evidence" value="ECO:0000314"/>
    <property type="project" value="SGD"/>
</dbReference>
<dbReference type="GO" id="GO:0008270">
    <property type="term" value="F:zinc ion binding"/>
    <property type="evidence" value="ECO:0007669"/>
    <property type="project" value="UniProtKB-KW"/>
</dbReference>
<dbReference type="GO" id="GO:0019413">
    <property type="term" value="P:acetate biosynthetic process"/>
    <property type="evidence" value="ECO:0000315"/>
    <property type="project" value="SGD"/>
</dbReference>
<dbReference type="GO" id="GO:0006357">
    <property type="term" value="P:regulation of transcription by RNA polymerase II"/>
    <property type="evidence" value="ECO:0000318"/>
    <property type="project" value="GO_Central"/>
</dbReference>
<dbReference type="CDD" id="cd12148">
    <property type="entry name" value="fungal_TF_MHR"/>
    <property type="match status" value="1"/>
</dbReference>
<dbReference type="FunFam" id="3.30.160.60:FF:002058">
    <property type="entry name" value="YML081W-like protein"/>
    <property type="match status" value="1"/>
</dbReference>
<dbReference type="Gene3D" id="3.30.160.60">
    <property type="entry name" value="Classic Zinc Finger"/>
    <property type="match status" value="2"/>
</dbReference>
<dbReference type="InterPro" id="IPR051059">
    <property type="entry name" value="VerF-like"/>
</dbReference>
<dbReference type="InterPro" id="IPR036236">
    <property type="entry name" value="Znf_C2H2_sf"/>
</dbReference>
<dbReference type="InterPro" id="IPR013087">
    <property type="entry name" value="Znf_C2H2_type"/>
</dbReference>
<dbReference type="PANTHER" id="PTHR40626">
    <property type="entry name" value="MIP31509P"/>
    <property type="match status" value="1"/>
</dbReference>
<dbReference type="PANTHER" id="PTHR40626:SF13">
    <property type="entry name" value="RESPIRATION FACTOR 2-RELATED"/>
    <property type="match status" value="1"/>
</dbReference>
<dbReference type="Pfam" id="PF00096">
    <property type="entry name" value="zf-C2H2"/>
    <property type="match status" value="1"/>
</dbReference>
<dbReference type="SMART" id="SM00355">
    <property type="entry name" value="ZnF_C2H2"/>
    <property type="match status" value="2"/>
</dbReference>
<dbReference type="SUPFAM" id="SSF57667">
    <property type="entry name" value="beta-beta-alpha zinc fingers"/>
    <property type="match status" value="1"/>
</dbReference>
<dbReference type="PROSITE" id="PS00028">
    <property type="entry name" value="ZINC_FINGER_C2H2_1"/>
    <property type="match status" value="2"/>
</dbReference>
<dbReference type="PROSITE" id="PS50157">
    <property type="entry name" value="ZINC_FINGER_C2H2_2"/>
    <property type="match status" value="2"/>
</dbReference>
<protein>
    <recommendedName>
        <fullName>Probable transcription factor TDA9</fullName>
    </recommendedName>
    <alternativeName>
        <fullName>Topoisomerase I damage affected protein 9</fullName>
    </alternativeName>
</protein>
<proteinExistence type="evidence at protein level"/>
<comment type="function">
    <text>DNA-binding protein that acts probably as a transcription factor.</text>
</comment>
<comment type="subcellular location">
    <subcellularLocation>
        <location evidence="3">Nucleus</location>
    </subcellularLocation>
</comment>
<comment type="disruption phenotype">
    <text evidence="5">Leads to cell death when overexpressing the camptothecin mimetic TOP1-T(722)A mutant.</text>
</comment>
<comment type="miscellaneous">
    <text evidence="4">Present with 672 molecules/cell in log phase SD medium.</text>
</comment>
<comment type="similarity">
    <text evidence="6">Belongs to the RSF2/TDA9 family.</text>
</comment>
<keyword id="KW-0238">DNA-binding</keyword>
<keyword id="KW-0479">Metal-binding</keyword>
<keyword id="KW-0539">Nucleus</keyword>
<keyword id="KW-0597">Phosphoprotein</keyword>
<keyword id="KW-1185">Reference proteome</keyword>
<keyword id="KW-0677">Repeat</keyword>
<keyword id="KW-0804">Transcription</keyword>
<keyword id="KW-0805">Transcription regulation</keyword>
<keyword id="KW-0862">Zinc</keyword>
<keyword id="KW-0863">Zinc-finger</keyword>
<evidence type="ECO:0000255" key="1">
    <source>
        <dbReference type="PROSITE-ProRule" id="PRU00042"/>
    </source>
</evidence>
<evidence type="ECO:0000256" key="2">
    <source>
        <dbReference type="SAM" id="MobiDB-lite"/>
    </source>
</evidence>
<evidence type="ECO:0000269" key="3">
    <source>
    </source>
</evidence>
<evidence type="ECO:0000269" key="4">
    <source>
    </source>
</evidence>
<evidence type="ECO:0000269" key="5">
    <source>
    </source>
</evidence>
<evidence type="ECO:0000305" key="6"/>
<evidence type="ECO:0007744" key="7">
    <source>
    </source>
</evidence>
<evidence type="ECO:0007744" key="8">
    <source>
    </source>
</evidence>
<name>TDA9_YEAST</name>
<gene>
    <name type="primary">TDA9</name>
    <name type="ordered locus">YML081W</name>
</gene>
<reference key="1">
    <citation type="journal article" date="1997" name="Nature">
        <title>The nucleotide sequence of Saccharomyces cerevisiae chromosome XIII.</title>
        <authorList>
            <person name="Bowman S."/>
            <person name="Churcher C.M."/>
            <person name="Badcock K."/>
            <person name="Brown D."/>
            <person name="Chillingworth T."/>
            <person name="Connor R."/>
            <person name="Dedman K."/>
            <person name="Devlin K."/>
            <person name="Gentles S."/>
            <person name="Hamlin N."/>
            <person name="Hunt S."/>
            <person name="Jagels K."/>
            <person name="Lye G."/>
            <person name="Moule S."/>
            <person name="Odell C."/>
            <person name="Pearson D."/>
            <person name="Rajandream M.A."/>
            <person name="Rice P."/>
            <person name="Skelton J."/>
            <person name="Walsh S.V."/>
            <person name="Whitehead S."/>
            <person name="Barrell B.G."/>
        </authorList>
    </citation>
    <scope>NUCLEOTIDE SEQUENCE [LARGE SCALE GENOMIC DNA]</scope>
    <source>
        <strain>ATCC 204508 / S288c</strain>
    </source>
</reference>
<reference key="2">
    <citation type="journal article" date="2014" name="G3 (Bethesda)">
        <title>The reference genome sequence of Saccharomyces cerevisiae: Then and now.</title>
        <authorList>
            <person name="Engel S.R."/>
            <person name="Dietrich F.S."/>
            <person name="Fisk D.G."/>
            <person name="Binkley G."/>
            <person name="Balakrishnan R."/>
            <person name="Costanzo M.C."/>
            <person name="Dwight S.S."/>
            <person name="Hitz B.C."/>
            <person name="Karra K."/>
            <person name="Nash R.S."/>
            <person name="Weng S."/>
            <person name="Wong E.D."/>
            <person name="Lloyd P."/>
            <person name="Skrzypek M.S."/>
            <person name="Miyasato S.R."/>
            <person name="Simison M."/>
            <person name="Cherry J.M."/>
        </authorList>
    </citation>
    <scope>GENOME REANNOTATION</scope>
    <source>
        <strain>ATCC 204508 / S288c</strain>
    </source>
</reference>
<reference key="3">
    <citation type="journal article" date="2003" name="Nature">
        <title>Global analysis of protein localization in budding yeast.</title>
        <authorList>
            <person name="Huh W.-K."/>
            <person name="Falvo J.V."/>
            <person name="Gerke L.C."/>
            <person name="Carroll A.S."/>
            <person name="Howson R.W."/>
            <person name="Weissman J.S."/>
            <person name="O'Shea E.K."/>
        </authorList>
    </citation>
    <scope>SUBCELLULAR LOCATION [LARGE SCALE ANALYSIS]</scope>
</reference>
<reference key="4">
    <citation type="journal article" date="2003" name="Nature">
        <title>Global analysis of protein expression in yeast.</title>
        <authorList>
            <person name="Ghaemmaghami S."/>
            <person name="Huh W.-K."/>
            <person name="Bower K."/>
            <person name="Howson R.W."/>
            <person name="Belle A."/>
            <person name="Dephoure N."/>
            <person name="O'Shea E.K."/>
            <person name="Weissman J.S."/>
        </authorList>
    </citation>
    <scope>LEVEL OF PROTEIN EXPRESSION [LARGE SCALE ANALYSIS]</scope>
</reference>
<reference key="5">
    <citation type="journal article" date="2007" name="J. Proteome Res.">
        <title>Large-scale phosphorylation analysis of alpha-factor-arrested Saccharomyces cerevisiae.</title>
        <authorList>
            <person name="Li X."/>
            <person name="Gerber S.A."/>
            <person name="Rudner A.D."/>
            <person name="Beausoleil S.A."/>
            <person name="Haas W."/>
            <person name="Villen J."/>
            <person name="Elias J.E."/>
            <person name="Gygi S.P."/>
        </authorList>
    </citation>
    <scope>PHOSPHORYLATION [LARGE SCALE ANALYSIS] AT SER-527</scope>
    <scope>IDENTIFICATION BY MASS SPECTROMETRY [LARGE SCALE ANALYSIS]</scope>
    <source>
        <strain>ADR376</strain>
    </source>
</reference>
<reference key="6">
    <citation type="journal article" date="2008" name="Mol. Cell">
        <title>A library of yeast transcription factor motifs reveals a widespread function for Rsc3 in targeting nucleosome exclusion at promoters.</title>
        <authorList>
            <person name="Badis G."/>
            <person name="Chan E.T."/>
            <person name="van Bakel H."/>
            <person name="Pena-Castillo L."/>
            <person name="Tillo D."/>
            <person name="Tsui K."/>
            <person name="Carlson C.D."/>
            <person name="Gossett A.J."/>
            <person name="Hasinoff M.J."/>
            <person name="Warren C.L."/>
            <person name="Gebbia M."/>
            <person name="Talukder S."/>
            <person name="Yang A."/>
            <person name="Mnaimneh S."/>
            <person name="Terterov D."/>
            <person name="Coburn D."/>
            <person name="Li Yeo A."/>
            <person name="Yeo Z.X."/>
            <person name="Clarke N.D."/>
            <person name="Lieb J.D."/>
            <person name="Ansari A.Z."/>
            <person name="Nislow C."/>
            <person name="Hughes T.R."/>
        </authorList>
    </citation>
    <scope>DNA-BINDING</scope>
    <scope>PREDICTION OF FUNCTION</scope>
</reference>
<reference key="7">
    <citation type="journal article" date="2008" name="Mol. Cell. Proteomics">
        <title>A multidimensional chromatography technology for in-depth phosphoproteome analysis.</title>
        <authorList>
            <person name="Albuquerque C.P."/>
            <person name="Smolka M.B."/>
            <person name="Payne S.H."/>
            <person name="Bafna V."/>
            <person name="Eng J."/>
            <person name="Zhou H."/>
        </authorList>
    </citation>
    <scope>IDENTIFICATION BY MASS SPECTROMETRY [LARGE SCALE ANALYSIS]</scope>
</reference>
<reference key="8">
    <citation type="journal article" date="2009" name="Science">
        <title>Global analysis of Cdk1 substrate phosphorylation sites provides insights into evolution.</title>
        <authorList>
            <person name="Holt L.J."/>
            <person name="Tuch B.B."/>
            <person name="Villen J."/>
            <person name="Johnson A.D."/>
            <person name="Gygi S.P."/>
            <person name="Morgan D.O."/>
        </authorList>
    </citation>
    <scope>PHOSPHORYLATION [LARGE SCALE ANALYSIS] AT SER-603</scope>
    <scope>IDENTIFICATION BY MASS SPECTROMETRY [LARGE SCALE ANALYSIS]</scope>
</reference>
<reference key="9">
    <citation type="journal article" date="2011" name="Genome Res.">
        <title>Selective ploidy ablation, a high-throughput plasmid transfer protocol, identifies new genes affecting topoisomerase I-induced DNA damage.</title>
        <authorList>
            <person name="Reid R.J."/>
            <person name="Gonzalez-Barrera S."/>
            <person name="Sunjevaric I."/>
            <person name="Alvaro D."/>
            <person name="Ciccone S."/>
            <person name="Wagner M."/>
            <person name="Rothstein R."/>
        </authorList>
    </citation>
    <scope>DISRUPTION PHENOTYPE</scope>
</reference>
<accession>Q04545</accession>
<accession>D6W0K2</accession>
<accession>Q03621</accession>
<sequence length="1251" mass="141465">MSSEEFKGLPIKRDISSTIYADRPPALSAPPCVGATGNDKIQVLPIPKKSRTIKTDKPRPFLCHICTRGFVRQEHLKRHQRAHTNEKPFLCVFCGRCFARRDLVLRHQHKLHSALVSKESINSKDKTEIDAINDKNIIQIQGNKQTILPTPSNPLAKTAVQLKKAAKEKKNGKQGKLDLSPSYGANNHSTDVSPSVGNSSTPAVIEETDSSSHFPLPDTNIPTKSKRHASFSASSAFTYSSDNFQKLHQQAKSDFDELQESIPHQVGFSTPQLTAQQLIENAIESGVVDLETLDLPPFLSLDGLPPASSSAAVAASEQIDICPSSATDTISGANSTPNQAATAPPFQLPIARESSSLFLANTPYLSDFLTMGSSYGGSGGFAKSITADPSLDYFNYKNHSHPDSRHNNSSSGINYSNNKNNNESIEKSQNNSNVINETIDHTDIHAHHADAHDDSFIESEEWLSKFIMDSQIDNDLKLNINHFNDIGFNNLHPQNPTTHSEPRNMHNENRDMHRSASKFQSVSENISPREQMSLFKTKQNKAISKFLSDEKIPSTASPSSSASPVQFDKKNVDINEFLLDESVSNLFTTRQIDLFKKNVNLYSPLFQNQKDAVSSTSLTPSLTTQTATTQSGPGWTDSSQKLTFFTEQLRNLIIKENNLKSNLFPTVDELNHYVDLYQVEFHKYFPFIHLYSIIPSSENYPLVISISMIGALYGFHSTHALLLSKIARTRVRMFLENTRSNHDKTPIWLMQSLVLLTFTSIFSNDMNAFRTVNTQIMILVQLIKISKLNYPLENFIKPPIESDHVLEYQDNPAVLNQFKAQYNTREQINRNFKYFILAQSRIRICHIVLLISNLFKSLVDFDCCFHSIDLKCGVPCYNEVLFFCENSRTWNENLTRFNIVLDSKFSLIEVSNGESNYEKCLMYLSNGNPYLYKNAKISFKTLLSLLISIHEKINIERDALKDSYESDFHAKNVQWRMHSRPLVATMLKHWELLYIKNGGILALSDENLPIINTNPSFRLIIPLYFFAKLRKCLDIAPTLRCIWNQDWNSMNSSLEKVCYERESLREATEYAVSVITFWIDTVSVMKGKSTQTPIFTITCIFVSILVIAGYMRRLEDFAQNKNSDCMIGSLKSTDRILWLKAFKTLKRIESHLSEREYKLQTFAEFLRVPDNGSLDIESLDSSLIENTLNSHDVTNQALDIITRTRLSSRTLYCGARILGDTPVWPVSLLFAHALQSRAIYNINHRKSVNSV</sequence>
<organism>
    <name type="scientific">Saccharomyces cerevisiae (strain ATCC 204508 / S288c)</name>
    <name type="common">Baker's yeast</name>
    <dbReference type="NCBI Taxonomy" id="559292"/>
    <lineage>
        <taxon>Eukaryota</taxon>
        <taxon>Fungi</taxon>
        <taxon>Dikarya</taxon>
        <taxon>Ascomycota</taxon>
        <taxon>Saccharomycotina</taxon>
        <taxon>Saccharomycetes</taxon>
        <taxon>Saccharomycetales</taxon>
        <taxon>Saccharomycetaceae</taxon>
        <taxon>Saccharomyces</taxon>
    </lineage>
</organism>
<feature type="chain" id="PRO_0000046864" description="Probable transcription factor TDA9">
    <location>
        <begin position="1"/>
        <end position="1251"/>
    </location>
</feature>
<feature type="zinc finger region" description="C2H2-type 1" evidence="1">
    <location>
        <begin position="61"/>
        <end position="83"/>
    </location>
</feature>
<feature type="zinc finger region" description="C2H2-type 2" evidence="1">
    <location>
        <begin position="89"/>
        <end position="112"/>
    </location>
</feature>
<feature type="region of interest" description="Disordered" evidence="2">
    <location>
        <begin position="160"/>
        <end position="227"/>
    </location>
</feature>
<feature type="region of interest" description="Disordered" evidence="2">
    <location>
        <begin position="398"/>
        <end position="428"/>
    </location>
</feature>
<feature type="region of interest" description="Disordered" evidence="2">
    <location>
        <begin position="617"/>
        <end position="636"/>
    </location>
</feature>
<feature type="compositionally biased region" description="Basic residues" evidence="2">
    <location>
        <begin position="164"/>
        <end position="173"/>
    </location>
</feature>
<feature type="compositionally biased region" description="Polar residues" evidence="2">
    <location>
        <begin position="183"/>
        <end position="202"/>
    </location>
</feature>
<feature type="compositionally biased region" description="Low complexity" evidence="2">
    <location>
        <begin position="407"/>
        <end position="428"/>
    </location>
</feature>
<feature type="compositionally biased region" description="Low complexity" evidence="2">
    <location>
        <begin position="617"/>
        <end position="634"/>
    </location>
</feature>
<feature type="modified residue" description="Phosphoserine" evidence="7">
    <location>
        <position position="527"/>
    </location>
</feature>
<feature type="modified residue" description="Phosphoserine" evidence="8">
    <location>
        <position position="603"/>
    </location>
</feature>